<gene>
    <name type="primary">HOXC8</name>
    <name type="synonym">HOX3A</name>
</gene>
<name>HXC8_HUMAN</name>
<keyword id="KW-0217">Developmental protein</keyword>
<keyword id="KW-0238">DNA-binding</keyword>
<keyword id="KW-0371">Homeobox</keyword>
<keyword id="KW-0539">Nucleus</keyword>
<keyword id="KW-1267">Proteomics identification</keyword>
<keyword id="KW-1185">Reference proteome</keyword>
<keyword id="KW-0804">Transcription</keyword>
<keyword id="KW-0805">Transcription regulation</keyword>
<accession>P31273</accession>
<accession>A8K4J4</accession>
<accession>O15221</accession>
<accession>O15362</accession>
<dbReference type="EMBL" id="AY014300">
    <property type="protein sequence ID" value="AAG42146.1"/>
    <property type="molecule type" value="Genomic_DNA"/>
</dbReference>
<dbReference type="EMBL" id="AY014299">
    <property type="protein sequence ID" value="AAG42146.1"/>
    <property type="status" value="JOINED"/>
    <property type="molecule type" value="Genomic_DNA"/>
</dbReference>
<dbReference type="EMBL" id="AK290959">
    <property type="protein sequence ID" value="BAF83648.1"/>
    <property type="molecule type" value="mRNA"/>
</dbReference>
<dbReference type="EMBL" id="CH471054">
    <property type="protein sequence ID" value="EAW96743.1"/>
    <property type="molecule type" value="Genomic_DNA"/>
</dbReference>
<dbReference type="EMBL" id="BC053898">
    <property type="protein sequence ID" value="AAH53898.1"/>
    <property type="molecule type" value="mRNA"/>
</dbReference>
<dbReference type="EMBL" id="X99680">
    <property type="protein sequence ID" value="CAA67996.1"/>
    <property type="molecule type" value="mRNA"/>
</dbReference>
<dbReference type="EMBL" id="X99681">
    <property type="protein sequence ID" value="CAA67997.1"/>
    <property type="molecule type" value="mRNA"/>
</dbReference>
<dbReference type="CCDS" id="CCDS8870.1"/>
<dbReference type="PIR" id="S15534">
    <property type="entry name" value="S15534"/>
</dbReference>
<dbReference type="RefSeq" id="NP_073149.1">
    <property type="nucleotide sequence ID" value="NM_022658.4"/>
</dbReference>
<dbReference type="RefSeq" id="XP_054227896.1">
    <property type="nucleotide sequence ID" value="XM_054371921.1"/>
</dbReference>
<dbReference type="RefSeq" id="XP_054227897.1">
    <property type="nucleotide sequence ID" value="XM_054371922.1"/>
</dbReference>
<dbReference type="SMR" id="P31273"/>
<dbReference type="BioGRID" id="109464">
    <property type="interactions" value="119"/>
</dbReference>
<dbReference type="CORUM" id="P31273"/>
<dbReference type="DIP" id="DIP-52312N"/>
<dbReference type="ELM" id="P31273"/>
<dbReference type="FunCoup" id="P31273">
    <property type="interactions" value="824"/>
</dbReference>
<dbReference type="IntAct" id="P31273">
    <property type="interactions" value="111"/>
</dbReference>
<dbReference type="MINT" id="P31273"/>
<dbReference type="STRING" id="9606.ENSP00000040584"/>
<dbReference type="iPTMnet" id="P31273"/>
<dbReference type="PhosphoSitePlus" id="P31273"/>
<dbReference type="BioMuta" id="HOXC8"/>
<dbReference type="DMDM" id="13124745"/>
<dbReference type="jPOST" id="P31273"/>
<dbReference type="MassIVE" id="P31273"/>
<dbReference type="PaxDb" id="9606-ENSP00000040584"/>
<dbReference type="PeptideAtlas" id="P31273"/>
<dbReference type="ProteomicsDB" id="54773"/>
<dbReference type="Antibodypedia" id="27310">
    <property type="antibodies" value="262 antibodies from 34 providers"/>
</dbReference>
<dbReference type="DNASU" id="3224"/>
<dbReference type="Ensembl" id="ENST00000040584.6">
    <property type="protein sequence ID" value="ENSP00000040584.4"/>
    <property type="gene ID" value="ENSG00000037965.6"/>
</dbReference>
<dbReference type="GeneID" id="3224"/>
<dbReference type="KEGG" id="hsa:3224"/>
<dbReference type="MANE-Select" id="ENST00000040584.6">
    <property type="protein sequence ID" value="ENSP00000040584.4"/>
    <property type="RefSeq nucleotide sequence ID" value="NM_022658.4"/>
    <property type="RefSeq protein sequence ID" value="NP_073149.1"/>
</dbReference>
<dbReference type="UCSC" id="uc001ser.4">
    <property type="organism name" value="human"/>
</dbReference>
<dbReference type="AGR" id="HGNC:5129"/>
<dbReference type="CTD" id="3224"/>
<dbReference type="DisGeNET" id="3224"/>
<dbReference type="GeneCards" id="HOXC8"/>
<dbReference type="HGNC" id="HGNC:5129">
    <property type="gene designation" value="HOXC8"/>
</dbReference>
<dbReference type="HPA" id="ENSG00000037965">
    <property type="expression patterns" value="Tissue enhanced (epididymis, skeletal muscle)"/>
</dbReference>
<dbReference type="MIM" id="142970">
    <property type="type" value="gene"/>
</dbReference>
<dbReference type="neXtProt" id="NX_P31273"/>
<dbReference type="OpenTargets" id="ENSG00000037965"/>
<dbReference type="PharmGKB" id="PA29404"/>
<dbReference type="VEuPathDB" id="HostDB:ENSG00000037965"/>
<dbReference type="eggNOG" id="KOG0489">
    <property type="taxonomic scope" value="Eukaryota"/>
</dbReference>
<dbReference type="GeneTree" id="ENSGT00940000161194"/>
<dbReference type="HOGENOM" id="CLU_061398_1_0_1"/>
<dbReference type="InParanoid" id="P31273"/>
<dbReference type="OMA" id="PSIMFPW"/>
<dbReference type="OrthoDB" id="6159439at2759"/>
<dbReference type="PAN-GO" id="P31273">
    <property type="GO annotations" value="4 GO annotations based on evolutionary models"/>
</dbReference>
<dbReference type="PhylomeDB" id="P31273"/>
<dbReference type="TreeFam" id="TF316310"/>
<dbReference type="PathwayCommons" id="P31273"/>
<dbReference type="Reactome" id="R-HSA-9762293">
    <property type="pathway name" value="Regulation of CDH11 gene transcription"/>
</dbReference>
<dbReference type="SignaLink" id="P31273"/>
<dbReference type="SIGNOR" id="P31273"/>
<dbReference type="BioGRID-ORCS" id="3224">
    <property type="hits" value="10 hits in 1175 CRISPR screens"/>
</dbReference>
<dbReference type="ChiTaRS" id="HOXC8">
    <property type="organism name" value="human"/>
</dbReference>
<dbReference type="GeneWiki" id="HOXC8"/>
<dbReference type="GenomeRNAi" id="3224"/>
<dbReference type="Pharos" id="P31273">
    <property type="development level" value="Tbio"/>
</dbReference>
<dbReference type="PRO" id="PR:P31273"/>
<dbReference type="Proteomes" id="UP000005640">
    <property type="component" value="Chromosome 12"/>
</dbReference>
<dbReference type="RNAct" id="P31273">
    <property type="molecule type" value="protein"/>
</dbReference>
<dbReference type="Bgee" id="ENSG00000037965">
    <property type="expression patterns" value="Expressed in sural nerve and 83 other cell types or tissues"/>
</dbReference>
<dbReference type="GO" id="GO:0000785">
    <property type="term" value="C:chromatin"/>
    <property type="evidence" value="ECO:0000247"/>
    <property type="project" value="NTNU_SB"/>
</dbReference>
<dbReference type="GO" id="GO:0015630">
    <property type="term" value="C:microtubule cytoskeleton"/>
    <property type="evidence" value="ECO:0000314"/>
    <property type="project" value="HPA"/>
</dbReference>
<dbReference type="GO" id="GO:0005654">
    <property type="term" value="C:nucleoplasm"/>
    <property type="evidence" value="ECO:0000314"/>
    <property type="project" value="HPA"/>
</dbReference>
<dbReference type="GO" id="GO:0005634">
    <property type="term" value="C:nucleus"/>
    <property type="evidence" value="ECO:0000318"/>
    <property type="project" value="GO_Central"/>
</dbReference>
<dbReference type="GO" id="GO:0000981">
    <property type="term" value="F:DNA-binding transcription factor activity, RNA polymerase II-specific"/>
    <property type="evidence" value="ECO:0000247"/>
    <property type="project" value="NTNU_SB"/>
</dbReference>
<dbReference type="GO" id="GO:0000977">
    <property type="term" value="F:RNA polymerase II transcription regulatory region sequence-specific DNA binding"/>
    <property type="evidence" value="ECO:0000318"/>
    <property type="project" value="GO_Central"/>
</dbReference>
<dbReference type="GO" id="GO:1990837">
    <property type="term" value="F:sequence-specific double-stranded DNA binding"/>
    <property type="evidence" value="ECO:0000314"/>
    <property type="project" value="ARUK-UCL"/>
</dbReference>
<dbReference type="GO" id="GO:0009952">
    <property type="term" value="P:anterior/posterior pattern specification"/>
    <property type="evidence" value="ECO:0007669"/>
    <property type="project" value="Ensembl"/>
</dbReference>
<dbReference type="GO" id="GO:0000122">
    <property type="term" value="P:negative regulation of transcription by RNA polymerase II"/>
    <property type="evidence" value="ECO:0007669"/>
    <property type="project" value="Ensembl"/>
</dbReference>
<dbReference type="GO" id="GO:0030182">
    <property type="term" value="P:neuron differentiation"/>
    <property type="evidence" value="ECO:0007669"/>
    <property type="project" value="Ensembl"/>
</dbReference>
<dbReference type="GO" id="GO:0006357">
    <property type="term" value="P:regulation of transcription by RNA polymerase II"/>
    <property type="evidence" value="ECO:0000318"/>
    <property type="project" value="GO_Central"/>
</dbReference>
<dbReference type="GO" id="GO:0048705">
    <property type="term" value="P:skeletal system morphogenesis"/>
    <property type="evidence" value="ECO:0007669"/>
    <property type="project" value="Ensembl"/>
</dbReference>
<dbReference type="CDD" id="cd00086">
    <property type="entry name" value="homeodomain"/>
    <property type="match status" value="1"/>
</dbReference>
<dbReference type="FunFam" id="1.10.10.60:FF:000072">
    <property type="entry name" value="Homeobox protein Hox-B8"/>
    <property type="match status" value="1"/>
</dbReference>
<dbReference type="Gene3D" id="1.10.10.60">
    <property type="entry name" value="Homeodomain-like"/>
    <property type="match status" value="1"/>
</dbReference>
<dbReference type="InterPro" id="IPR050948">
    <property type="entry name" value="Antp_homeobox_TF"/>
</dbReference>
<dbReference type="InterPro" id="IPR001356">
    <property type="entry name" value="HD"/>
</dbReference>
<dbReference type="InterPro" id="IPR020479">
    <property type="entry name" value="HD_metazoa"/>
</dbReference>
<dbReference type="InterPro" id="IPR001827">
    <property type="entry name" value="Homeobox_Antennapedia_CS"/>
</dbReference>
<dbReference type="InterPro" id="IPR017970">
    <property type="entry name" value="Homeobox_CS"/>
</dbReference>
<dbReference type="InterPro" id="IPR009057">
    <property type="entry name" value="Homeodomain-like_sf"/>
</dbReference>
<dbReference type="InterPro" id="IPR000047">
    <property type="entry name" value="HTH_motif"/>
</dbReference>
<dbReference type="PANTHER" id="PTHR46166">
    <property type="entry name" value="HOMEOBOX DOMAIN-CONTAINING PROTEIN"/>
    <property type="match status" value="1"/>
</dbReference>
<dbReference type="PANTHER" id="PTHR46166:SF4">
    <property type="entry name" value="HOMEOBOX PROTEIN HOX-C8"/>
    <property type="match status" value="1"/>
</dbReference>
<dbReference type="Pfam" id="PF00046">
    <property type="entry name" value="Homeodomain"/>
    <property type="match status" value="1"/>
</dbReference>
<dbReference type="PRINTS" id="PR00024">
    <property type="entry name" value="HOMEOBOX"/>
</dbReference>
<dbReference type="PRINTS" id="PR00031">
    <property type="entry name" value="HTHREPRESSR"/>
</dbReference>
<dbReference type="SMART" id="SM00389">
    <property type="entry name" value="HOX"/>
    <property type="match status" value="1"/>
</dbReference>
<dbReference type="SUPFAM" id="SSF46689">
    <property type="entry name" value="Homeodomain-like"/>
    <property type="match status" value="1"/>
</dbReference>
<dbReference type="PROSITE" id="PS00032">
    <property type="entry name" value="ANTENNAPEDIA"/>
    <property type="match status" value="1"/>
</dbReference>
<dbReference type="PROSITE" id="PS00027">
    <property type="entry name" value="HOMEOBOX_1"/>
    <property type="match status" value="1"/>
</dbReference>
<dbReference type="PROSITE" id="PS50071">
    <property type="entry name" value="HOMEOBOX_2"/>
    <property type="match status" value="1"/>
</dbReference>
<sequence>MSSYFVNPLFSKYKAGESLEPAYYDCRFPQSVGRSHALVYGPGGSAPGFQHASHHVQDFFHHGTSGISNSGYQQNPCSLSCHGDASKFYGYEALPRQSLYGAQQEASVVQYPDCKSSANTNSSEGQGHLNQNSSPSLMFPWMRPHAPGRRSGRQTYSRYQTLELEKEFLFNPYLTRKRRIEVSHALGLTERQVKIWFQNRRMKWKKENNKDKLPGARDEEKVEEEGNEEEEKEEEEKEENKD</sequence>
<organism>
    <name type="scientific">Homo sapiens</name>
    <name type="common">Human</name>
    <dbReference type="NCBI Taxonomy" id="9606"/>
    <lineage>
        <taxon>Eukaryota</taxon>
        <taxon>Metazoa</taxon>
        <taxon>Chordata</taxon>
        <taxon>Craniata</taxon>
        <taxon>Vertebrata</taxon>
        <taxon>Euteleostomi</taxon>
        <taxon>Mammalia</taxon>
        <taxon>Eutheria</taxon>
        <taxon>Euarchontoglires</taxon>
        <taxon>Primates</taxon>
        <taxon>Haplorrhini</taxon>
        <taxon>Catarrhini</taxon>
        <taxon>Hominidae</taxon>
        <taxon>Homo</taxon>
    </lineage>
</organism>
<evidence type="ECO:0000255" key="1">
    <source>
        <dbReference type="PROSITE-ProRule" id="PRU00108"/>
    </source>
</evidence>
<evidence type="ECO:0000256" key="2">
    <source>
        <dbReference type="SAM" id="MobiDB-lite"/>
    </source>
</evidence>
<evidence type="ECO:0000269" key="3">
    <source>
    </source>
</evidence>
<evidence type="ECO:0000269" key="4">
    <source>
    </source>
</evidence>
<evidence type="ECO:0000305" key="5"/>
<reference key="1">
    <citation type="journal article" date="2002" name="Teratology">
        <title>Complete mutation analysis panel of the 39 human HOX genes.</title>
        <authorList>
            <person name="Kosaki K."/>
            <person name="Kosaki R."/>
            <person name="Suzuki T."/>
            <person name="Yoshihashi H."/>
            <person name="Takahashi T."/>
            <person name="Sasaki K."/>
            <person name="Tomita M."/>
            <person name="McGinnis W."/>
            <person name="Matsuo N."/>
        </authorList>
    </citation>
    <scope>NUCLEOTIDE SEQUENCE [GENOMIC DNA]</scope>
</reference>
<reference key="2">
    <citation type="journal article" date="2004" name="Nat. Genet.">
        <title>Complete sequencing and characterization of 21,243 full-length human cDNAs.</title>
        <authorList>
            <person name="Ota T."/>
            <person name="Suzuki Y."/>
            <person name="Nishikawa T."/>
            <person name="Otsuki T."/>
            <person name="Sugiyama T."/>
            <person name="Irie R."/>
            <person name="Wakamatsu A."/>
            <person name="Hayashi K."/>
            <person name="Sato H."/>
            <person name="Nagai K."/>
            <person name="Kimura K."/>
            <person name="Makita H."/>
            <person name="Sekine M."/>
            <person name="Obayashi M."/>
            <person name="Nishi T."/>
            <person name="Shibahara T."/>
            <person name="Tanaka T."/>
            <person name="Ishii S."/>
            <person name="Yamamoto J."/>
            <person name="Saito K."/>
            <person name="Kawai Y."/>
            <person name="Isono Y."/>
            <person name="Nakamura Y."/>
            <person name="Nagahari K."/>
            <person name="Murakami K."/>
            <person name="Yasuda T."/>
            <person name="Iwayanagi T."/>
            <person name="Wagatsuma M."/>
            <person name="Shiratori A."/>
            <person name="Sudo H."/>
            <person name="Hosoiri T."/>
            <person name="Kaku Y."/>
            <person name="Kodaira H."/>
            <person name="Kondo H."/>
            <person name="Sugawara M."/>
            <person name="Takahashi M."/>
            <person name="Kanda K."/>
            <person name="Yokoi T."/>
            <person name="Furuya T."/>
            <person name="Kikkawa E."/>
            <person name="Omura Y."/>
            <person name="Abe K."/>
            <person name="Kamihara K."/>
            <person name="Katsuta N."/>
            <person name="Sato K."/>
            <person name="Tanikawa M."/>
            <person name="Yamazaki M."/>
            <person name="Ninomiya K."/>
            <person name="Ishibashi T."/>
            <person name="Yamashita H."/>
            <person name="Murakawa K."/>
            <person name="Fujimori K."/>
            <person name="Tanai H."/>
            <person name="Kimata M."/>
            <person name="Watanabe M."/>
            <person name="Hiraoka S."/>
            <person name="Chiba Y."/>
            <person name="Ishida S."/>
            <person name="Ono Y."/>
            <person name="Takiguchi S."/>
            <person name="Watanabe S."/>
            <person name="Yosida M."/>
            <person name="Hotuta T."/>
            <person name="Kusano J."/>
            <person name="Kanehori K."/>
            <person name="Takahashi-Fujii A."/>
            <person name="Hara H."/>
            <person name="Tanase T.-O."/>
            <person name="Nomura Y."/>
            <person name="Togiya S."/>
            <person name="Komai F."/>
            <person name="Hara R."/>
            <person name="Takeuchi K."/>
            <person name="Arita M."/>
            <person name="Imose N."/>
            <person name="Musashino K."/>
            <person name="Yuuki H."/>
            <person name="Oshima A."/>
            <person name="Sasaki N."/>
            <person name="Aotsuka S."/>
            <person name="Yoshikawa Y."/>
            <person name="Matsunawa H."/>
            <person name="Ichihara T."/>
            <person name="Shiohata N."/>
            <person name="Sano S."/>
            <person name="Moriya S."/>
            <person name="Momiyama H."/>
            <person name="Satoh N."/>
            <person name="Takami S."/>
            <person name="Terashima Y."/>
            <person name="Suzuki O."/>
            <person name="Nakagawa S."/>
            <person name="Senoh A."/>
            <person name="Mizoguchi H."/>
            <person name="Goto Y."/>
            <person name="Shimizu F."/>
            <person name="Wakebe H."/>
            <person name="Hishigaki H."/>
            <person name="Watanabe T."/>
            <person name="Sugiyama A."/>
            <person name="Takemoto M."/>
            <person name="Kawakami B."/>
            <person name="Yamazaki M."/>
            <person name="Watanabe K."/>
            <person name="Kumagai A."/>
            <person name="Itakura S."/>
            <person name="Fukuzumi Y."/>
            <person name="Fujimori Y."/>
            <person name="Komiyama M."/>
            <person name="Tashiro H."/>
            <person name="Tanigami A."/>
            <person name="Fujiwara T."/>
            <person name="Ono T."/>
            <person name="Yamada K."/>
            <person name="Fujii Y."/>
            <person name="Ozaki K."/>
            <person name="Hirao M."/>
            <person name="Ohmori Y."/>
            <person name="Kawabata A."/>
            <person name="Hikiji T."/>
            <person name="Kobatake N."/>
            <person name="Inagaki H."/>
            <person name="Ikema Y."/>
            <person name="Okamoto S."/>
            <person name="Okitani R."/>
            <person name="Kawakami T."/>
            <person name="Noguchi S."/>
            <person name="Itoh T."/>
            <person name="Shigeta K."/>
            <person name="Senba T."/>
            <person name="Matsumura K."/>
            <person name="Nakajima Y."/>
            <person name="Mizuno T."/>
            <person name="Morinaga M."/>
            <person name="Sasaki M."/>
            <person name="Togashi T."/>
            <person name="Oyama M."/>
            <person name="Hata H."/>
            <person name="Watanabe M."/>
            <person name="Komatsu T."/>
            <person name="Mizushima-Sugano J."/>
            <person name="Satoh T."/>
            <person name="Shirai Y."/>
            <person name="Takahashi Y."/>
            <person name="Nakagawa K."/>
            <person name="Okumura K."/>
            <person name="Nagase T."/>
            <person name="Nomura N."/>
            <person name="Kikuchi H."/>
            <person name="Masuho Y."/>
            <person name="Yamashita R."/>
            <person name="Nakai K."/>
            <person name="Yada T."/>
            <person name="Nakamura Y."/>
            <person name="Ohara O."/>
            <person name="Isogai T."/>
            <person name="Sugano S."/>
        </authorList>
    </citation>
    <scope>NUCLEOTIDE SEQUENCE [LARGE SCALE MRNA]</scope>
</reference>
<reference key="3">
    <citation type="submission" date="2005-07" db="EMBL/GenBank/DDBJ databases">
        <authorList>
            <person name="Mural R.J."/>
            <person name="Istrail S."/>
            <person name="Sutton G.G."/>
            <person name="Florea L."/>
            <person name="Halpern A.L."/>
            <person name="Mobarry C.M."/>
            <person name="Lippert R."/>
            <person name="Walenz B."/>
            <person name="Shatkay H."/>
            <person name="Dew I."/>
            <person name="Miller J.R."/>
            <person name="Flanigan M.J."/>
            <person name="Edwards N.J."/>
            <person name="Bolanos R."/>
            <person name="Fasulo D."/>
            <person name="Halldorsson B.V."/>
            <person name="Hannenhalli S."/>
            <person name="Turner R."/>
            <person name="Yooseph S."/>
            <person name="Lu F."/>
            <person name="Nusskern D.R."/>
            <person name="Shue B.C."/>
            <person name="Zheng X.H."/>
            <person name="Zhong F."/>
            <person name="Delcher A.L."/>
            <person name="Huson D.H."/>
            <person name="Kravitz S.A."/>
            <person name="Mouchard L."/>
            <person name="Reinert K."/>
            <person name="Remington K.A."/>
            <person name="Clark A.G."/>
            <person name="Waterman M.S."/>
            <person name="Eichler E.E."/>
            <person name="Adams M.D."/>
            <person name="Hunkapiller M.W."/>
            <person name="Myers E.W."/>
            <person name="Venter J.C."/>
        </authorList>
    </citation>
    <scope>NUCLEOTIDE SEQUENCE [LARGE SCALE GENOMIC DNA]</scope>
</reference>
<reference key="4">
    <citation type="journal article" date="2004" name="Genome Res.">
        <title>The status, quality, and expansion of the NIH full-length cDNA project: the Mammalian Gene Collection (MGC).</title>
        <authorList>
            <consortium name="The MGC Project Team"/>
        </authorList>
    </citation>
    <scope>NUCLEOTIDE SEQUENCE [LARGE SCALE MRNA]</scope>
    <source>
        <tissue>Eye</tissue>
    </source>
</reference>
<reference key="5">
    <citation type="journal article" date="1997" name="FEBS Lett.">
        <title>Distinct patterns of all-trans retinoic acid dependent expression of HOXB and HOXC homeogenes in human embryonal and small-cell lung carcinoma cell lines.</title>
        <authorList>
            <person name="Flagiello D."/>
            <person name="Gibaud A."/>
            <person name="Dutrillaux B."/>
            <person name="Poupon M.-F."/>
            <person name="Malfoy B."/>
        </authorList>
    </citation>
    <scope>NUCLEOTIDE SEQUENCE [MRNA] OF 64-114 AND 147-195</scope>
</reference>
<reference key="6">
    <citation type="journal article" date="1989" name="Genome">
        <title>Organization of human class I homeobox genes.</title>
        <authorList>
            <person name="Boncinelli E."/>
            <person name="Acampora D."/>
            <person name="Pannese M."/>
            <person name="D'Esposito M."/>
            <person name="Somma R."/>
            <person name="Gaudino G."/>
            <person name="Stornaiuolo A."/>
            <person name="Cafiero M."/>
            <person name="Faiella A."/>
            <person name="Simeone A."/>
        </authorList>
    </citation>
    <scope>NUCLEOTIDE SEQUENCE [GENOMIC DNA] OF 149-214</scope>
</reference>
<reference key="7">
    <citation type="journal article" date="1995" name="Mol. Cell. Biol.">
        <title>Both Pbx1 and E2A-Pbx1 bind the DNA motif ATCAATCAA cooperatively with the products of multiple murine Hox genes, some of which are themselves oncogenes.</title>
        <authorList>
            <person name="Lu Q."/>
            <person name="Knoepfler P.S."/>
            <person name="Scheele J."/>
            <person name="Wright D.D."/>
            <person name="Kamps M.P."/>
        </authorList>
    </citation>
    <scope>INTERACTION WITH PBX1</scope>
</reference>
<reference key="8">
    <citation type="journal article" date="2003" name="Proc. Natl. Acad. Sci. U.S.A.">
        <title>Homez, a homeobox leucine zipper gene specific to the vertebrate lineage.</title>
        <authorList>
            <person name="Bayarsaihan D."/>
            <person name="Enkhmandakh B."/>
            <person name="Makeyev A."/>
            <person name="Greally J.M."/>
            <person name="Leckman J.F."/>
            <person name="Ruddle F.H."/>
        </authorList>
    </citation>
    <scope>INTERACTION WITH HOMEZ</scope>
</reference>
<feature type="chain" id="PRO_0000200180" description="Homeobox protein Hox-C8">
    <location>
        <begin position="1"/>
        <end position="242"/>
    </location>
</feature>
<feature type="DNA-binding region" description="Homeobox" evidence="1">
    <location>
        <begin position="149"/>
        <end position="208"/>
    </location>
</feature>
<feature type="region of interest" description="Disordered" evidence="2">
    <location>
        <begin position="114"/>
        <end position="154"/>
    </location>
</feature>
<feature type="region of interest" description="Disordered" evidence="2">
    <location>
        <begin position="206"/>
        <end position="242"/>
    </location>
</feature>
<feature type="short sequence motif" description="Antp-type hexapeptide">
    <location>
        <begin position="138"/>
        <end position="143"/>
    </location>
</feature>
<feature type="compositionally biased region" description="Polar residues" evidence="2">
    <location>
        <begin position="116"/>
        <end position="136"/>
    </location>
</feature>
<feature type="compositionally biased region" description="Basic and acidic residues" evidence="2">
    <location>
        <begin position="206"/>
        <end position="220"/>
    </location>
</feature>
<feature type="compositionally biased region" description="Acidic residues" evidence="2">
    <location>
        <begin position="221"/>
        <end position="242"/>
    </location>
</feature>
<feature type="sequence conflict" description="In Ref. 6; CAA67997." evidence="5" ref="6">
    <original>E</original>
    <variation>Q</variation>
    <location>
        <position position="165"/>
    </location>
</feature>
<comment type="function">
    <text>Sequence-specific transcription factor which is part of a developmental regulatory system that provides cells with specific positional identities on the anterior-posterior axis.</text>
</comment>
<comment type="subunit">
    <text evidence="3 4">Interacts with HOMEZ (PubMed:12925734). Forms a DNA-binding heterodimer with transcription factor PBX1 (PubMed:7791786).</text>
</comment>
<comment type="interaction">
    <interactant intactId="EBI-1752118">
        <id>P31273</id>
    </interactant>
    <interactant intactId="EBI-11976299">
        <id>Q5BKX5-3</id>
        <label>ACTMAP</label>
    </interactant>
    <organismsDiffer>false</organismsDiffer>
    <experiments>3</experiments>
</comment>
<comment type="interaction">
    <interactant intactId="EBI-1752118">
        <id>P31273</id>
    </interactant>
    <interactant intactId="EBI-10173507">
        <id>Q6UY14-3</id>
        <label>ADAMTSL4</label>
    </interactant>
    <organismsDiffer>false</organismsDiffer>
    <experiments>3</experiments>
</comment>
<comment type="interaction">
    <interactant intactId="EBI-1752118">
        <id>P31273</id>
    </interactant>
    <interactant intactId="EBI-8643161">
        <id>Q9NX04</id>
        <label>AIRIM</label>
    </interactant>
    <organismsDiffer>false</organismsDiffer>
    <experiments>3</experiments>
</comment>
<comment type="interaction">
    <interactant intactId="EBI-1752118">
        <id>P31273</id>
    </interactant>
    <interactant intactId="EBI-11954519">
        <id>Q49AR9</id>
        <label>ANKS1A</label>
    </interactant>
    <organismsDiffer>false</organismsDiffer>
    <experiments>3</experiments>
</comment>
<comment type="interaction">
    <interactant intactId="EBI-1752118">
        <id>P31273</id>
    </interactant>
    <interactant intactId="EBI-2548012">
        <id>Q9H2G9</id>
        <label>BLZF1</label>
    </interactant>
    <organismsDiffer>false</organismsDiffer>
    <experiments>3</experiments>
</comment>
<comment type="interaction">
    <interactant intactId="EBI-1752118">
        <id>P31273</id>
    </interactant>
    <interactant intactId="EBI-10179719">
        <id>A2RRN7</id>
        <label>CADPS</label>
    </interactant>
    <organismsDiffer>false</organismsDiffer>
    <experiments>3</experiments>
</comment>
<comment type="interaction">
    <interactant intactId="EBI-1752118">
        <id>P31273</id>
    </interactant>
    <interactant intactId="EBI-1573056">
        <id>Q9BSQ5</id>
        <label>CCM2</label>
    </interactant>
    <organismsDiffer>false</organismsDiffer>
    <experiments>3</experiments>
</comment>
<comment type="interaction">
    <interactant intactId="EBI-1752118">
        <id>P31273</id>
    </interactant>
    <interactant intactId="EBI-739624">
        <id>Q8NHQ1</id>
        <label>CEP70</label>
    </interactant>
    <organismsDiffer>false</organismsDiffer>
    <experiments>3</experiments>
</comment>
<comment type="interaction">
    <interactant intactId="EBI-1752118">
        <id>P31273</id>
    </interactant>
    <interactant intactId="EBI-718615">
        <id>Q9H5F2</id>
        <label>CFAP68</label>
    </interactant>
    <organismsDiffer>false</organismsDiffer>
    <experiments>3</experiments>
</comment>
<comment type="interaction">
    <interactant intactId="EBI-1752118">
        <id>P31273</id>
    </interactant>
    <interactant intactId="EBI-7043337">
        <id>P05813</id>
        <label>CRYBA1</label>
    </interactant>
    <organismsDiffer>false</organismsDiffer>
    <experiments>3</experiments>
</comment>
<comment type="interaction">
    <interactant intactId="EBI-1752118">
        <id>P31273</id>
    </interactant>
    <interactant intactId="EBI-3867333">
        <id>A8MQ03</id>
        <label>CYSRT1</label>
    </interactant>
    <organismsDiffer>false</organismsDiffer>
    <experiments>3</experiments>
</comment>
<comment type="interaction">
    <interactant intactId="EBI-1752118">
        <id>P31273</id>
    </interactant>
    <interactant intactId="EBI-739789">
        <id>Q92997</id>
        <label>DVL3</label>
    </interactant>
    <organismsDiffer>false</organismsDiffer>
    <experiments>3</experiments>
</comment>
<comment type="interaction">
    <interactant intactId="EBI-1752118">
        <id>P31273</id>
    </interactant>
    <interactant intactId="EBI-948630">
        <id>Q86Y13</id>
        <label>DZIP3</label>
    </interactant>
    <organismsDiffer>false</organismsDiffer>
    <experiments>3</experiments>
</comment>
<comment type="interaction">
    <interactant intactId="EBI-1752118">
        <id>P31273</id>
    </interactant>
    <interactant intactId="EBI-947964">
        <id>Q16610</id>
        <label>ECM1</label>
    </interactant>
    <organismsDiffer>false</organismsDiffer>
    <experiments>3</experiments>
</comment>
<comment type="interaction">
    <interactant intactId="EBI-1752118">
        <id>P31273</id>
    </interactant>
    <interactant intactId="EBI-602349">
        <id>P49356</id>
        <label>FNTB</label>
    </interactant>
    <organismsDiffer>false</organismsDiffer>
    <experiments>3</experiments>
</comment>
<comment type="interaction">
    <interactant intactId="EBI-1752118">
        <id>P31273</id>
    </interactant>
    <interactant intactId="EBI-5916454">
        <id>A6NEM1</id>
        <label>GOLGA6L9</label>
    </interactant>
    <organismsDiffer>false</organismsDiffer>
    <experiments>3</experiments>
</comment>
<comment type="interaction">
    <interactant intactId="EBI-1752118">
        <id>P31273</id>
    </interactant>
    <interactant intactId="EBI-10194609">
        <id>Q9H4Y5</id>
        <label>GSTO2</label>
    </interactant>
    <organismsDiffer>false</organismsDiffer>
    <experiments>3</experiments>
</comment>
<comment type="interaction">
    <interactant intactId="EBI-1752118">
        <id>P31273</id>
    </interactant>
    <interactant intactId="EBI-740553">
        <id>P13807</id>
        <label>GYS1</label>
    </interactant>
    <organismsDiffer>false</organismsDiffer>
    <experiments>3</experiments>
</comment>
<comment type="interaction">
    <interactant intactId="EBI-1752118">
        <id>P31273</id>
    </interactant>
    <interactant intactId="EBI-8470369">
        <id>Q9UBX0</id>
        <label>HESX1</label>
    </interactant>
    <organismsDiffer>false</organismsDiffer>
    <experiments>3</experiments>
</comment>
<comment type="interaction">
    <interactant intactId="EBI-1752118">
        <id>P31273</id>
    </interactant>
    <interactant intactId="EBI-3957655">
        <id>P31249</id>
        <label>HOXD3</label>
    </interactant>
    <organismsDiffer>false</organismsDiffer>
    <experiments>3</experiments>
</comment>
<comment type="interaction">
    <interactant intactId="EBI-1752118">
        <id>P31273</id>
    </interactant>
    <interactant intactId="EBI-7116203">
        <id>O75031</id>
        <label>HSF2BP</label>
    </interactant>
    <organismsDiffer>false</organismsDiffer>
    <experiments>3</experiments>
</comment>
<comment type="interaction">
    <interactant intactId="EBI-1752118">
        <id>P31273</id>
    </interactant>
    <interactant intactId="EBI-747204">
        <id>Q9UKT9</id>
        <label>IKZF3</label>
    </interactant>
    <organismsDiffer>false</organismsDiffer>
    <experiments>3</experiments>
</comment>
<comment type="interaction">
    <interactant intactId="EBI-1752118">
        <id>P31273</id>
    </interactant>
    <interactant intactId="EBI-4397613">
        <id>Q7L273</id>
        <label>KCTD9</label>
    </interactant>
    <organismsDiffer>false</organismsDiffer>
    <experiments>3</experiments>
</comment>
<comment type="interaction">
    <interactant intactId="EBI-1752118">
        <id>P31273</id>
    </interactant>
    <interactant intactId="EBI-10981970">
        <id>Q5T749</id>
        <label>KPRP</label>
    </interactant>
    <organismsDiffer>false</organismsDiffer>
    <experiments>3</experiments>
</comment>
<comment type="interaction">
    <interactant intactId="EBI-1752118">
        <id>P31273</id>
    </interactant>
    <interactant intactId="EBI-1047093">
        <id>O76011</id>
        <label>KRT34</label>
    </interactant>
    <organismsDiffer>false</organismsDiffer>
    <experiments>5</experiments>
</comment>
<comment type="interaction">
    <interactant intactId="EBI-1752118">
        <id>P31273</id>
    </interactant>
    <interactant intactId="EBI-1058674">
        <id>Q92764</id>
        <label>KRT35</label>
    </interactant>
    <organismsDiffer>false</organismsDiffer>
    <experiments>3</experiments>
</comment>
<comment type="interaction">
    <interactant intactId="EBI-1752118">
        <id>P31273</id>
    </interactant>
    <interactant intactId="EBI-11958506">
        <id>O76013-2</id>
        <label>KRT36</label>
    </interactant>
    <organismsDiffer>false</organismsDiffer>
    <experiments>3</experiments>
</comment>
<comment type="interaction">
    <interactant intactId="EBI-1752118">
        <id>P31273</id>
    </interactant>
    <interactant intactId="EBI-10171697">
        <id>Q6A162</id>
        <label>KRT40</label>
    </interactant>
    <organismsDiffer>false</organismsDiffer>
    <experiments>3</experiments>
</comment>
<comment type="interaction">
    <interactant intactId="EBI-1752118">
        <id>P31273</id>
    </interactant>
    <interactant intactId="EBI-11959885">
        <id>Q07627</id>
        <label>KRTAP1-1</label>
    </interactant>
    <organismsDiffer>false</organismsDiffer>
    <experiments>3</experiments>
</comment>
<comment type="interaction">
    <interactant intactId="EBI-1752118">
        <id>P31273</id>
    </interactant>
    <interactant intactId="EBI-11749135">
        <id>Q8IUG1</id>
        <label>KRTAP1-3</label>
    </interactant>
    <organismsDiffer>false</organismsDiffer>
    <experiments>3</experiments>
</comment>
<comment type="interaction">
    <interactant intactId="EBI-1752118">
        <id>P31273</id>
    </interactant>
    <interactant intactId="EBI-10172290">
        <id>P60409</id>
        <label>KRTAP10-7</label>
    </interactant>
    <organismsDiffer>false</organismsDiffer>
    <experiments>3</experiments>
</comment>
<comment type="interaction">
    <interactant intactId="EBI-1752118">
        <id>P31273</id>
    </interactant>
    <interactant intactId="EBI-10171774">
        <id>P60410</id>
        <label>KRTAP10-8</label>
    </interactant>
    <organismsDiffer>false</organismsDiffer>
    <experiments>5</experiments>
</comment>
<comment type="interaction">
    <interactant intactId="EBI-1752118">
        <id>P31273</id>
    </interactant>
    <interactant intactId="EBI-10172052">
        <id>P60411</id>
        <label>KRTAP10-9</label>
    </interactant>
    <organismsDiffer>false</organismsDiffer>
    <experiments>3</experiments>
</comment>
<comment type="interaction">
    <interactant intactId="EBI-1752118">
        <id>P31273</id>
    </interactant>
    <interactant intactId="EBI-1052037">
        <id>Q8IUC1</id>
        <label>KRTAP11-1</label>
    </interactant>
    <organismsDiffer>false</organismsDiffer>
    <experiments>3</experiments>
</comment>
<comment type="interaction">
    <interactant intactId="EBI-1752118">
        <id>P31273</id>
    </interactant>
    <interactant intactId="EBI-10210845">
        <id>P59990</id>
        <label>KRTAP12-1</label>
    </interactant>
    <organismsDiffer>false</organismsDiffer>
    <experiments>3</experiments>
</comment>
<comment type="interaction">
    <interactant intactId="EBI-1752118">
        <id>P31273</id>
    </interactant>
    <interactant intactId="EBI-10241252">
        <id>Q3SY46</id>
        <label>KRTAP13-3</label>
    </interactant>
    <organismsDiffer>false</organismsDiffer>
    <experiments>3</experiments>
</comment>
<comment type="interaction">
    <interactant intactId="EBI-1752118">
        <id>P31273</id>
    </interactant>
    <interactant intactId="EBI-12196745">
        <id>Q3LHN2</id>
        <label>KRTAP19-2</label>
    </interactant>
    <organismsDiffer>false</organismsDiffer>
    <experiments>3</experiments>
</comment>
<comment type="interaction">
    <interactant intactId="EBI-1752118">
        <id>P31273</id>
    </interactant>
    <interactant intactId="EBI-12111050">
        <id>Q3LI64</id>
        <label>KRTAP6-1</label>
    </interactant>
    <organismsDiffer>false</organismsDiffer>
    <experiments>3</experiments>
</comment>
<comment type="interaction">
    <interactant intactId="EBI-1752118">
        <id>P31273</id>
    </interactant>
    <interactant intactId="EBI-11962084">
        <id>Q3LI66</id>
        <label>KRTAP6-2</label>
    </interactant>
    <organismsDiffer>false</organismsDiffer>
    <experiments>3</experiments>
</comment>
<comment type="interaction">
    <interactant intactId="EBI-1752118">
        <id>P31273</id>
    </interactant>
    <interactant intactId="EBI-22311199">
        <id>Q3LI67</id>
        <label>KRTAP6-3</label>
    </interactant>
    <organismsDiffer>false</organismsDiffer>
    <experiments>3</experiments>
</comment>
<comment type="interaction">
    <interactant intactId="EBI-1752118">
        <id>P31273</id>
    </interactant>
    <interactant intactId="EBI-10261141">
        <id>Q8IUC2</id>
        <label>KRTAP8-1</label>
    </interactant>
    <organismsDiffer>false</organismsDiffer>
    <experiments>3</experiments>
</comment>
<comment type="interaction">
    <interactant intactId="EBI-1752118">
        <id>P31273</id>
    </interactant>
    <interactant intactId="EBI-747813">
        <id>Q5SW96</id>
        <label>LDLRAP1</label>
    </interactant>
    <organismsDiffer>false</organismsDiffer>
    <experiments>8</experiments>
</comment>
<comment type="interaction">
    <interactant intactId="EBI-1752118">
        <id>P31273</id>
    </interactant>
    <interactant intactId="EBI-740738">
        <id>O95751</id>
        <label>LDOC1</label>
    </interactant>
    <organismsDiffer>false</organismsDiffer>
    <experiments>3</experiments>
</comment>
<comment type="interaction">
    <interactant intactId="EBI-1752118">
        <id>P31273</id>
    </interactant>
    <interactant intactId="EBI-12179869">
        <id>P50458</id>
        <label>LHX2</label>
    </interactant>
    <organismsDiffer>false</organismsDiffer>
    <experiments>3</experiments>
</comment>
<comment type="interaction">
    <interactant intactId="EBI-1752118">
        <id>P31273</id>
    </interactant>
    <interactant intactId="EBI-12039345">
        <id>Q9UBR4-2</id>
        <label>LHX3</label>
    </interactant>
    <organismsDiffer>false</organismsDiffer>
    <experiments>3</experiments>
</comment>
<comment type="interaction">
    <interactant intactId="EBI-1752118">
        <id>P31273</id>
    </interactant>
    <interactant intactId="EBI-18273118">
        <id>Q9P2M1</id>
        <label>LRP2BP</label>
    </interactant>
    <organismsDiffer>false</organismsDiffer>
    <experiments>3</experiments>
</comment>
<comment type="interaction">
    <interactant intactId="EBI-1752118">
        <id>P31273</id>
    </interactant>
    <interactant intactId="EBI-12345753">
        <id>Q13387-4</id>
        <label>MAPK8IP2</label>
    </interactant>
    <organismsDiffer>false</organismsDiffer>
    <experiments>3</experiments>
</comment>
<comment type="interaction">
    <interactant intactId="EBI-1752118">
        <id>P31273</id>
    </interactant>
    <interactant intactId="EBI-2864512">
        <id>P50221</id>
        <label>MEOX1</label>
    </interactant>
    <organismsDiffer>false</organismsDiffer>
    <experiments>3</experiments>
</comment>
<comment type="interaction">
    <interactant intactId="EBI-1752118">
        <id>P31273</id>
    </interactant>
    <interactant intactId="EBI-16439278">
        <id>Q6FHY5</id>
        <label>MEOX2</label>
    </interactant>
    <organismsDiffer>false</organismsDiffer>
    <experiments>3</experiments>
</comment>
<comment type="interaction">
    <interactant intactId="EBI-1752118">
        <id>P31273</id>
    </interactant>
    <interactant intactId="EBI-10174029">
        <id>A6NJ78-4</id>
        <label>METTL15</label>
    </interactant>
    <organismsDiffer>false</organismsDiffer>
    <experiments>3</experiments>
</comment>
<comment type="interaction">
    <interactant intactId="EBI-1752118">
        <id>P31273</id>
    </interactant>
    <interactant intactId="EBI-748610">
        <id>Q6IA69</id>
        <label>NADSYN1</label>
    </interactant>
    <organismsDiffer>false</organismsDiffer>
    <experiments>3</experiments>
</comment>
<comment type="interaction">
    <interactant intactId="EBI-1752118">
        <id>P31273</id>
    </interactant>
    <interactant intactId="EBI-10271199">
        <id>Q8NI38</id>
        <label>NFKBID</label>
    </interactant>
    <organismsDiffer>false</organismsDiffer>
    <experiments>3</experiments>
</comment>
<comment type="interaction">
    <interactant intactId="EBI-1752118">
        <id>P31273</id>
    </interactant>
    <interactant intactId="EBI-10261509">
        <id>Q8IV28</id>
        <label>NID2</label>
    </interactant>
    <organismsDiffer>false</organismsDiffer>
    <experiments>3</experiments>
</comment>
<comment type="interaction">
    <interactant intactId="EBI-1752118">
        <id>P31273</id>
    </interactant>
    <interactant intactId="EBI-22310682">
        <id>P0DPK4</id>
        <label>NOTCH2NLC</label>
    </interactant>
    <organismsDiffer>false</organismsDiffer>
    <experiments>3</experiments>
</comment>
<comment type="interaction">
    <interactant intactId="EBI-1752118">
        <id>P31273</id>
    </interactant>
    <interactant intactId="EBI-536879">
        <id>O43482</id>
        <label>OIP5</label>
    </interactant>
    <organismsDiffer>false</organismsDiffer>
    <experiments>3</experiments>
</comment>
<comment type="interaction">
    <interactant intactId="EBI-1752118">
        <id>P31273</id>
    </interactant>
    <interactant intactId="EBI-296331">
        <id>Q02548</id>
        <label>PAX5</label>
    </interactant>
    <organismsDiffer>false</organismsDiffer>
    <experiments>3</experiments>
</comment>
<comment type="interaction">
    <interactant intactId="EBI-1752118">
        <id>P31273</id>
    </interactant>
    <interactant intactId="EBI-747278">
        <id>P26367</id>
        <label>PAX6</label>
    </interactant>
    <organismsDiffer>false</organismsDiffer>
    <experiments>3</experiments>
</comment>
<comment type="interaction">
    <interactant intactId="EBI-1752118">
        <id>P31273</id>
    </interactant>
    <interactant intactId="EBI-2683132">
        <id>Q06710</id>
        <label>PAX8</label>
    </interactant>
    <organismsDiffer>false</organismsDiffer>
    <experiments>3</experiments>
</comment>
<comment type="interaction">
    <interactant intactId="EBI-1752118">
        <id>P31273</id>
    </interactant>
    <interactant intactId="EBI-301611">
        <id>P40424</id>
        <label>PBX1</label>
    </interactant>
    <organismsDiffer>false</organismsDiffer>
    <experiments>3</experiments>
</comment>
<comment type="interaction">
    <interactant intactId="EBI-1752118">
        <id>P31273</id>
    </interactant>
    <interactant intactId="EBI-348489">
        <id>P40425</id>
        <label>PBX2</label>
    </interactant>
    <organismsDiffer>false</organismsDiffer>
    <experiments>3</experiments>
</comment>
<comment type="interaction">
    <interactant intactId="EBI-1752118">
        <id>P31273</id>
    </interactant>
    <interactant intactId="EBI-10302990">
        <id>Q9BYU1</id>
        <label>PBX4</label>
    </interactant>
    <organismsDiffer>false</organismsDiffer>
    <experiments>3</experiments>
</comment>
<comment type="interaction">
    <interactant intactId="EBI-1752118">
        <id>P31273</id>
    </interactant>
    <interactant intactId="EBI-9640281">
        <id>Q5VU43-2</id>
        <label>PDE4DIP</label>
    </interactant>
    <organismsDiffer>false</organismsDiffer>
    <experiments>3</experiments>
</comment>
<comment type="interaction">
    <interactant intactId="EBI-1752118">
        <id>P31273</id>
    </interactant>
    <interactant intactId="EBI-357275">
        <id>Q99471</id>
        <label>PFDN5</label>
    </interactant>
    <organismsDiffer>false</organismsDiffer>
    <experiments>3</experiments>
</comment>
<comment type="interaction">
    <interactant intactId="EBI-1752118">
        <id>P31273</id>
    </interactant>
    <interactant intactId="EBI-726466">
        <id>O15496</id>
        <label>PLA2G10</label>
    </interactant>
    <organismsDiffer>false</organismsDiffer>
    <experiments>3</experiments>
</comment>
<comment type="interaction">
    <interactant intactId="EBI-1752118">
        <id>P31273</id>
    </interactant>
    <interactant intactId="EBI-949255">
        <id>Q58EX7</id>
        <label>PLEKHG4</label>
    </interactant>
    <organismsDiffer>false</organismsDiffer>
    <experiments>3</experiments>
</comment>
<comment type="interaction">
    <interactant intactId="EBI-1752118">
        <id>P31273</id>
    </interactant>
    <interactant intactId="EBI-943588">
        <id>Q16633</id>
        <label>POU2AF1</label>
    </interactant>
    <organismsDiffer>false</organismsDiffer>
    <experiments>3</experiments>
</comment>
<comment type="interaction">
    <interactant intactId="EBI-1752118">
        <id>P31273</id>
    </interactant>
    <interactant intactId="EBI-12029004">
        <id>P78424</id>
        <label>POU6F2</label>
    </interactant>
    <organismsDiffer>false</organismsDiffer>
    <experiments>3</experiments>
</comment>
<comment type="interaction">
    <interactant intactId="EBI-1752118">
        <id>P31273</id>
    </interactant>
    <interactant intactId="EBI-3957793">
        <id>Q9GZV8</id>
        <label>PRDM14</label>
    </interactant>
    <organismsDiffer>false</organismsDiffer>
    <experiments>3</experiments>
</comment>
<comment type="interaction">
    <interactant intactId="EBI-1752118">
        <id>P31273</id>
    </interactant>
    <interactant intactId="EBI-11320284">
        <id>Q9NQX0</id>
        <label>PRDM6</label>
    </interactant>
    <organismsDiffer>false</organismsDiffer>
    <experiments>3</experiments>
</comment>
<comment type="interaction">
    <interactant intactId="EBI-1752118">
        <id>P31273</id>
    </interactant>
    <interactant intactId="EBI-2340624">
        <id>Q9BYM8</id>
        <label>RBCK1</label>
    </interactant>
    <organismsDiffer>false</organismsDiffer>
    <experiments>3</experiments>
</comment>
<comment type="interaction">
    <interactant intactId="EBI-1752118">
        <id>P31273</id>
    </interactant>
    <interactant intactId="EBI-10269374">
        <id>Q8ND83</id>
        <label>SLAIN1</label>
    </interactant>
    <organismsDiffer>false</organismsDiffer>
    <experiments>3</experiments>
</comment>
<comment type="interaction">
    <interactant intactId="EBI-1752118">
        <id>P31273</id>
    </interactant>
    <interactant intactId="EBI-1752620">
        <id>Q15036</id>
        <label>SNX17</label>
    </interactant>
    <organismsDiffer>false</organismsDiffer>
    <experiments>9</experiments>
</comment>
<comment type="interaction">
    <interactant intactId="EBI-1752118">
        <id>P31273</id>
    </interactant>
    <interactant intactId="EBI-1644036">
        <id>Q86TI0</id>
        <label>TBC1D1</label>
    </interactant>
    <organismsDiffer>false</organismsDiffer>
    <experiments>3</experiments>
</comment>
<comment type="interaction">
    <interactant intactId="EBI-1752118">
        <id>P31273</id>
    </interactant>
    <interactant intactId="EBI-12096770">
        <id>O60806</id>
        <label>TBX19</label>
    </interactant>
    <organismsDiffer>false</organismsDiffer>
    <experiments>3</experiments>
</comment>
<comment type="interaction">
    <interactant intactId="EBI-1752118">
        <id>P31273</id>
    </interactant>
    <interactant intactId="EBI-6427217">
        <id>Q9Y458</id>
        <label>TBX22</label>
    </interactant>
    <organismsDiffer>false</organismsDiffer>
    <experiments>3</experiments>
</comment>
<comment type="interaction">
    <interactant intactId="EBI-1752118">
        <id>P31273</id>
    </interactant>
    <interactant intactId="EBI-750487">
        <id>Q8WW24</id>
        <label>TEKT4</label>
    </interactant>
    <organismsDiffer>false</organismsDiffer>
    <experiments>3</experiments>
</comment>
<comment type="interaction">
    <interactant intactId="EBI-1752118">
        <id>P31273</id>
    </interactant>
    <interactant intactId="EBI-11741437">
        <id>Q08117-2</id>
        <label>TLE5</label>
    </interactant>
    <organismsDiffer>false</organismsDiffer>
    <experiments>3</experiments>
</comment>
<comment type="interaction">
    <interactant intactId="EBI-1752118">
        <id>P31273</id>
    </interactant>
    <interactant intactId="EBI-949753">
        <id>Q63HR2</id>
        <label>TNS2</label>
    </interactant>
    <organismsDiffer>false</organismsDiffer>
    <experiments>3</experiments>
</comment>
<comment type="interaction">
    <interactant intactId="EBI-1752118">
        <id>P31273</id>
    </interactant>
    <interactant intactId="EBI-359224">
        <id>Q13077</id>
        <label>TRAF1</label>
    </interactant>
    <organismsDiffer>false</organismsDiffer>
    <experiments>3</experiments>
</comment>
<comment type="interaction">
    <interactant intactId="EBI-1752118">
        <id>P31273</id>
    </interactant>
    <interactant intactId="EBI-492476">
        <id>Q96RU7</id>
        <label>TRIB3</label>
    </interactant>
    <organismsDiffer>false</organismsDiffer>
    <experiments>3</experiments>
</comment>
<comment type="interaction">
    <interactant intactId="EBI-1752118">
        <id>P31273</id>
    </interactant>
    <interactant intactId="EBI-719493">
        <id>P14373</id>
        <label>TRIM27</label>
    </interactant>
    <organismsDiffer>false</organismsDiffer>
    <experiments>3</experiments>
</comment>
<comment type="interaction">
    <interactant intactId="EBI-1752118">
        <id>P31273</id>
    </interactant>
    <interactant intactId="EBI-5235829">
        <id>Q8IWZ5</id>
        <label>TRIM42</label>
    </interactant>
    <organismsDiffer>false</organismsDiffer>
    <experiments>3</experiments>
</comment>
<comment type="interaction">
    <interactant intactId="EBI-1752118">
        <id>P31273</id>
    </interactant>
    <interactant intactId="EBI-742327">
        <id>Q15654</id>
        <label>TRIP6</label>
    </interactant>
    <organismsDiffer>false</organismsDiffer>
    <experiments>3</experiments>
</comment>
<comment type="interaction">
    <interactant intactId="EBI-1752118">
        <id>P31273</id>
    </interactant>
    <interactant intactId="EBI-12806590">
        <id>Q86WV8</id>
        <label>TSC1</label>
    </interactant>
    <organismsDiffer>false</organismsDiffer>
    <experiments>3</experiments>
</comment>
<comment type="interaction">
    <interactant intactId="EBI-1752118">
        <id>P31273</id>
    </interactant>
    <interactant intactId="EBI-11975223">
        <id>Q70EL1-9</id>
        <label>USP54</label>
    </interactant>
    <organismsDiffer>false</organismsDiffer>
    <experiments>3</experiments>
</comment>
<comment type="interaction">
    <interactant intactId="EBI-1752118">
        <id>P31273</id>
    </interactant>
    <interactant intactId="EBI-10191303">
        <id>O95231</id>
        <label>VENTX</label>
    </interactant>
    <organismsDiffer>false</organismsDiffer>
    <experiments>3</experiments>
</comment>
<comment type="interaction">
    <interactant intactId="EBI-1752118">
        <id>P31273</id>
    </interactant>
    <interactant intactId="EBI-12040603">
        <id>Q9NZC7-5</id>
        <label>WWOX</label>
    </interactant>
    <organismsDiffer>false</organismsDiffer>
    <experiments>3</experiments>
</comment>
<comment type="interaction">
    <interactant intactId="EBI-1752118">
        <id>P31273</id>
    </interactant>
    <interactant intactId="EBI-11419867">
        <id>Q8TF47</id>
        <label>ZFP90</label>
    </interactant>
    <organismsDiffer>false</organismsDiffer>
    <experiments>3</experiments>
</comment>
<comment type="interaction">
    <interactant intactId="EBI-1752118">
        <id>P31273</id>
    </interactant>
    <interactant intactId="EBI-7850213">
        <id>Q9UDW3</id>
        <label>ZMAT5</label>
    </interactant>
    <organismsDiffer>false</organismsDiffer>
    <experiments>3</experiments>
</comment>
<comment type="interaction">
    <interactant intactId="EBI-1752118">
        <id>P31273</id>
    </interactant>
    <interactant intactId="EBI-527853">
        <id>Q9UGI0</id>
        <label>ZRANB1</label>
    </interactant>
    <organismsDiffer>false</organismsDiffer>
    <experiments>3</experiments>
</comment>
<comment type="subcellular location">
    <subcellularLocation>
        <location>Nucleus</location>
    </subcellularLocation>
</comment>
<comment type="similarity">
    <text evidence="5">Belongs to the Antp homeobox family.</text>
</comment>
<protein>
    <recommendedName>
        <fullName>Homeobox protein Hox-C8</fullName>
    </recommendedName>
    <alternativeName>
        <fullName>Homeobox protein Hox-3A</fullName>
    </alternativeName>
</protein>
<proteinExistence type="evidence at protein level"/>